<dbReference type="EMBL" id="CR555306">
    <property type="protein sequence ID" value="CAI09735.1"/>
    <property type="molecule type" value="Genomic_DNA"/>
</dbReference>
<dbReference type="RefSeq" id="WP_011239393.1">
    <property type="nucleotide sequence ID" value="NC_006513.1"/>
</dbReference>
<dbReference type="SMR" id="Q5NYX9"/>
<dbReference type="STRING" id="76114.ebA6316"/>
<dbReference type="KEGG" id="eba:ebA6316"/>
<dbReference type="eggNOG" id="COG0534">
    <property type="taxonomic scope" value="Bacteria"/>
</dbReference>
<dbReference type="HOGENOM" id="CLU_012893_6_0_4"/>
<dbReference type="OrthoDB" id="9780160at2"/>
<dbReference type="Proteomes" id="UP000006552">
    <property type="component" value="Chromosome"/>
</dbReference>
<dbReference type="GO" id="GO:0005886">
    <property type="term" value="C:plasma membrane"/>
    <property type="evidence" value="ECO:0007669"/>
    <property type="project" value="UniProtKB-SubCell"/>
</dbReference>
<dbReference type="GO" id="GO:0015297">
    <property type="term" value="F:antiporter activity"/>
    <property type="evidence" value="ECO:0007669"/>
    <property type="project" value="UniProtKB-KW"/>
</dbReference>
<dbReference type="GO" id="GO:0042910">
    <property type="term" value="F:xenobiotic transmembrane transporter activity"/>
    <property type="evidence" value="ECO:0007669"/>
    <property type="project" value="InterPro"/>
</dbReference>
<dbReference type="GO" id="GO:0006811">
    <property type="term" value="P:monoatomic ion transport"/>
    <property type="evidence" value="ECO:0007669"/>
    <property type="project" value="UniProtKB-KW"/>
</dbReference>
<dbReference type="CDD" id="cd13131">
    <property type="entry name" value="MATE_NorM_like"/>
    <property type="match status" value="1"/>
</dbReference>
<dbReference type="InterPro" id="IPR002528">
    <property type="entry name" value="MATE_fam"/>
</dbReference>
<dbReference type="InterPro" id="IPR050222">
    <property type="entry name" value="MATE_MdtK"/>
</dbReference>
<dbReference type="InterPro" id="IPR048279">
    <property type="entry name" value="MdtK-like"/>
</dbReference>
<dbReference type="NCBIfam" id="TIGR00797">
    <property type="entry name" value="matE"/>
    <property type="match status" value="1"/>
</dbReference>
<dbReference type="PANTHER" id="PTHR43298:SF2">
    <property type="entry name" value="FMN_FAD EXPORTER YEEO-RELATED"/>
    <property type="match status" value="1"/>
</dbReference>
<dbReference type="PANTHER" id="PTHR43298">
    <property type="entry name" value="MULTIDRUG RESISTANCE PROTEIN NORM-RELATED"/>
    <property type="match status" value="1"/>
</dbReference>
<dbReference type="Pfam" id="PF01554">
    <property type="entry name" value="MatE"/>
    <property type="match status" value="2"/>
</dbReference>
<dbReference type="PIRSF" id="PIRSF006603">
    <property type="entry name" value="DinF"/>
    <property type="match status" value="1"/>
</dbReference>
<comment type="function">
    <text evidence="1">Multidrug efflux pump.</text>
</comment>
<comment type="subcellular location">
    <subcellularLocation>
        <location evidence="1">Cell inner membrane</location>
        <topology evidence="1">Multi-pass membrane protein</topology>
    </subcellularLocation>
</comment>
<comment type="similarity">
    <text evidence="3">Belongs to the multi antimicrobial extrusion (MATE) (TC 2.A.66.1) family.</text>
</comment>
<organism>
    <name type="scientific">Aromatoleum aromaticum (strain DSM 19018 / LMG 30748 / EbN1)</name>
    <name type="common">Azoarcus sp. (strain EbN1)</name>
    <dbReference type="NCBI Taxonomy" id="76114"/>
    <lineage>
        <taxon>Bacteria</taxon>
        <taxon>Pseudomonadati</taxon>
        <taxon>Pseudomonadota</taxon>
        <taxon>Betaproteobacteria</taxon>
        <taxon>Rhodocyclales</taxon>
        <taxon>Rhodocyclaceae</taxon>
        <taxon>Aromatoleum</taxon>
    </lineage>
</organism>
<sequence>MSAPILFPLSAPESSFTIAGRLFHHAWPVLVAQLLSMSMLIADTVITGRYGTLDLAAVAVGSGVYISIVMLLVGVLQAVAPTVAHHFGARRVDAIGPALQQGFWLALMLALPGIALLAFPGFLLELSSVPADVAGKTRDYLLATAFGLPAVLLYRTFYAFNNALGRPRALMMISFIVTSTHIPLAWALVHGAFGLPPLGAIGCGISTAIVNWIAFACGAGYLAHNRDYRPYRLFANWQPPRRRDLLALLKLGIPMGLSTFIEVSSFTLIALFAARLGAEAVAGHRVVANLAALIYMLPLAISIAILVLVGQAAGAREPARARATVRVGMGLTVGLVALIGVLLWVGREPVVALFSADPAVRAVALGLVFYICIYQIFDAVQTVAAHALRGYKVTFMPMLLHALCFWGIALAGGYWLAFHAPGREQSPTVAGFWEASVVATILASVLFGWLLRVVMRRPQNVQT</sequence>
<proteinExistence type="inferred from homology"/>
<keyword id="KW-0050">Antiport</keyword>
<keyword id="KW-0997">Cell inner membrane</keyword>
<keyword id="KW-1003">Cell membrane</keyword>
<keyword id="KW-0406">Ion transport</keyword>
<keyword id="KW-0472">Membrane</keyword>
<keyword id="KW-1185">Reference proteome</keyword>
<keyword id="KW-0812">Transmembrane</keyword>
<keyword id="KW-1133">Transmembrane helix</keyword>
<keyword id="KW-0813">Transport</keyword>
<reference key="1">
    <citation type="journal article" date="2005" name="Arch. Microbiol.">
        <title>The genome sequence of an anaerobic aromatic-degrading denitrifying bacterium, strain EbN1.</title>
        <authorList>
            <person name="Rabus R."/>
            <person name="Kube M."/>
            <person name="Heider J."/>
            <person name="Beck A."/>
            <person name="Heitmann K."/>
            <person name="Widdel F."/>
            <person name="Reinhardt R."/>
        </authorList>
    </citation>
    <scope>NUCLEOTIDE SEQUENCE [LARGE SCALE GENOMIC DNA]</scope>
    <source>
        <strain>DSM 19018 / LMG 30748 / EbN1</strain>
    </source>
</reference>
<evidence type="ECO:0000250" key="1"/>
<evidence type="ECO:0000255" key="2"/>
<evidence type="ECO:0000305" key="3"/>
<name>NORM_AROAE</name>
<protein>
    <recommendedName>
        <fullName>Probable multidrug resistance protein NorM</fullName>
    </recommendedName>
    <alternativeName>
        <fullName>Multidrug-efflux transporter</fullName>
    </alternativeName>
</protein>
<gene>
    <name type="primary">norM</name>
    <name type="ordered locus">AZOSEA36100</name>
    <name type="ORF">ebA6316</name>
</gene>
<feature type="chain" id="PRO_0000164196" description="Probable multidrug resistance protein NorM">
    <location>
        <begin position="1"/>
        <end position="463"/>
    </location>
</feature>
<feature type="transmembrane region" description="Helical" evidence="2">
    <location>
        <begin position="59"/>
        <end position="81"/>
    </location>
</feature>
<feature type="transmembrane region" description="Helical" evidence="2">
    <location>
        <begin position="102"/>
        <end position="124"/>
    </location>
</feature>
<feature type="transmembrane region" description="Helical" evidence="2">
    <location>
        <begin position="139"/>
        <end position="161"/>
    </location>
</feature>
<feature type="transmembrane region" description="Helical" evidence="2">
    <location>
        <begin position="173"/>
        <end position="195"/>
    </location>
</feature>
<feature type="transmembrane region" description="Helical" evidence="2">
    <location>
        <begin position="200"/>
        <end position="222"/>
    </location>
</feature>
<feature type="transmembrane region" description="Helical" evidence="2">
    <location>
        <begin position="251"/>
        <end position="273"/>
    </location>
</feature>
<feature type="transmembrane region" description="Helical" evidence="2">
    <location>
        <begin position="288"/>
        <end position="310"/>
    </location>
</feature>
<feature type="transmembrane region" description="Helical" evidence="2">
    <location>
        <begin position="323"/>
        <end position="345"/>
    </location>
</feature>
<feature type="transmembrane region" description="Helical" evidence="2">
    <location>
        <begin position="360"/>
        <end position="377"/>
    </location>
</feature>
<feature type="transmembrane region" description="Helical" evidence="2">
    <location>
        <begin position="397"/>
        <end position="419"/>
    </location>
</feature>
<feature type="transmembrane region" description="Helical" evidence="2">
    <location>
        <begin position="429"/>
        <end position="451"/>
    </location>
</feature>
<accession>Q5NYX9</accession>